<comment type="function">
    <text evidence="1 2">Function as phospholipase selective for phosphatidylcholine (By similarity). Implicated as a critical step in numerous cellular pathways, including signal transduction, membrane trafficking, and the regulation of mitosis. May be involved in the regulation of perinuclear intravesicular membrane traffic (By similarity).</text>
</comment>
<comment type="catalytic activity">
    <reaction evidence="1">
        <text>a 1,2-diacyl-sn-glycero-3-phosphocholine + H2O = a 1,2-diacyl-sn-glycero-3-phosphate + choline + H(+)</text>
        <dbReference type="Rhea" id="RHEA:14445"/>
        <dbReference type="ChEBI" id="CHEBI:15354"/>
        <dbReference type="ChEBI" id="CHEBI:15377"/>
        <dbReference type="ChEBI" id="CHEBI:15378"/>
        <dbReference type="ChEBI" id="CHEBI:57643"/>
        <dbReference type="ChEBI" id="CHEBI:58608"/>
        <dbReference type="EC" id="3.1.4.4"/>
    </reaction>
    <physiologicalReaction direction="left-to-right" evidence="1">
        <dbReference type="Rhea" id="RHEA:14446"/>
    </physiologicalReaction>
</comment>
<comment type="catalytic activity">
    <reaction evidence="1">
        <text>ethanol + a 1,2-diacyl-sn-glycero-3-phosphocholine = 1,2-diacyl-sn-glycero-3-phosphoethanol + choline</text>
        <dbReference type="Rhea" id="RHEA:44868"/>
        <dbReference type="ChEBI" id="CHEBI:15354"/>
        <dbReference type="ChEBI" id="CHEBI:16236"/>
        <dbReference type="ChEBI" id="CHEBI:57643"/>
        <dbReference type="ChEBI" id="CHEBI:84672"/>
    </reaction>
    <physiologicalReaction direction="left-to-right" evidence="1">
        <dbReference type="Rhea" id="RHEA:44869"/>
    </physiologicalReaction>
</comment>
<comment type="catalytic activity">
    <reaction evidence="1">
        <text>1,2-dihexadecanoyl-sn-glycero-3-phosphocholine + H2O = 1,2-dihexadecanoyl-sn-glycero-3-phosphate + choline + H(+)</text>
        <dbReference type="Rhea" id="RHEA:44872"/>
        <dbReference type="ChEBI" id="CHEBI:15354"/>
        <dbReference type="ChEBI" id="CHEBI:15377"/>
        <dbReference type="ChEBI" id="CHEBI:15378"/>
        <dbReference type="ChEBI" id="CHEBI:72859"/>
        <dbReference type="ChEBI" id="CHEBI:72999"/>
    </reaction>
    <physiologicalReaction direction="left-to-right" evidence="1">
        <dbReference type="Rhea" id="RHEA:44873"/>
    </physiologicalReaction>
</comment>
<comment type="activity regulation">
    <text evidence="1">Stimulated by phosphatidylinositol 4,5-bisphosphate and phosphatidylinositol 3,4,5-trisphosphate, activated by the phosphokinase C-alpha, by the ADP-ribosylation factor-1 (ARF-1), and to a lesser extent by GTP-binding proteins: RHO A, RAC-1 and CDC42. Inhibited by oleate.</text>
</comment>
<comment type="subunit">
    <text evidence="1">Interacts with PIP5K1B.</text>
</comment>
<comment type="subcellular location">
    <subcellularLocation>
        <location evidence="2">Cytoplasm</location>
        <location evidence="2">Perinuclear region</location>
    </subcellularLocation>
    <subcellularLocation>
        <location evidence="2">Endoplasmic reticulum membrane</location>
        <topology evidence="2">Lipid-anchor</topology>
        <orientation evidence="2">Cytoplasmic side</orientation>
    </subcellularLocation>
    <subcellularLocation>
        <location evidence="2">Golgi apparatus membrane</location>
        <topology evidence="2">Lipid-anchor</topology>
        <orientation evidence="2">Cytoplasmic side</orientation>
    </subcellularLocation>
    <subcellularLocation>
        <location evidence="2">Late endosome membrane</location>
        <topology evidence="2">Lipid-anchor</topology>
        <orientation evidence="2">Cytoplasmic side</orientation>
    </subcellularLocation>
</comment>
<comment type="alternative products">
    <event type="alternative splicing"/>
    <isoform>
        <id>P70496-1</id>
        <name>PLD1A</name>
        <sequence type="displayed"/>
    </isoform>
    <isoform>
        <id>P70496-2</id>
        <name>PLD1B</name>
        <sequence type="described" ref="VSP_005024"/>
    </isoform>
    <isoform>
        <id>P70496-3</id>
        <name>PLD1C</name>
        <sequence type="described" ref="VSP_005025 VSP_005026"/>
    </isoform>
</comment>
<comment type="PTM">
    <text evidence="6">Phosphorylated on serine and threonine residues.</text>
</comment>
<comment type="PTM">
    <text evidence="6">It is uncertain whether palmitoylation is on Cys-240 and/or Cys-241. Palmitoylation is required prior to phosphorylation.</text>
</comment>
<comment type="similarity">
    <text evidence="12">Belongs to the phospholipase D family.</text>
</comment>
<name>PLD1_RAT</name>
<proteinExistence type="evidence at protein level"/>
<accession>P70496</accession>
<accession>O08959</accession>
<accession>O35856</accession>
<accession>O54765</accession>
<accession>P70497</accession>
<accession>Q9QWJ6</accession>
<sequence>MSLRSEARVNTSTLQKIAADMSNLIENLDTRELHFEGEEVEYDASPGDPTAQEACIPFSSIYNTQGFKEPNIQIYLSGCPVKAQVLEVERFTSTSRMPSVNLYTIELTHGEFTWQVKRKFKHFQEFHRELLKYKAFIRIPIPTKRHTFRRQNVKEEPREMPSLPRSSENAIQEEQFFGRRKQLEDYLTKILKMPMYRNYHATTEFLDVSQLSFIHDLGPKGLEGMIMKRSGGHRIPGVNCCGHGRACYRWSKRWLIVKDSFLLYMKPDSGAIAFVLLVDKEFRIKVGKKETETKYGLRIDNLSRTLILKCNSYRHARWWGGAIEEFIQKHGTDFLKDHRFGSYAAVHENILAKWYVNAKGYFEDIANAMEGATEEIFITDWWLSPEIFLKRPVVEGNRWRLDCILKRKAQQGVRIFIMLYKEVELALGINSEYTKRTLMRLHPNIKVMRHPDHVSSSVYLWAHHEKLVIIDQSVAFVGGIDLAYGRWDDNEHRLTDVGSVKRVTSGQSLGSLTAASVESMESLSLKDKHQSHKNEPVLKSVNDTDMKLKGIGKSRKFSKFSLYRQLHRRNLHNSDSISSVDSASSYFNHYRSHQNLIHGIKPHLKLFRPSSESEQGLTRHSADTGSIRSVQTGVGELHGETRFWHGKDYCNFVFKDWVQLDKPFADFIDRYSTPRMPWHDIGSVVHGKAARDVARHFIQRWNFTKIMKPKYRSLSYPFLLPKSQATAHELRYQVPGAVHAKAQLLRSAADWSAGIKHHEESIHAAYTHVIENSKHYIYIENQFFISCADDKVVFNKVGNAIAQRILKAHREGQRYRVYIVIPLLPGFEGDISTGGGNALQAIMHFNYRTMCRGESSILEQLKPELGNKWINYISFCGLRTHAELEGNLVTELIYVHSKLLIADDNTVIIGSANINDRSMLGKRDSEMAVIVQDTETVPSVMDGKEYQAGRFAQGLRLECFRLVLGYLSDPSEDIQDPVSDKFFKEIWVSTAARNATIYDKVFRCLPNDEVHNLIQLRDFINKPILAKEDRLRAEEELRKIRGFLVQFPFYFLSEENLLPSVGTKEAIVPMEVWT</sequence>
<evidence type="ECO:0000250" key="1">
    <source>
        <dbReference type="UniProtKB" id="Q13393"/>
    </source>
</evidence>
<evidence type="ECO:0000250" key="2">
    <source>
        <dbReference type="UniProtKB" id="Q9Z280"/>
    </source>
</evidence>
<evidence type="ECO:0000255" key="3">
    <source>
        <dbReference type="PROSITE-ProRule" id="PRU00145"/>
    </source>
</evidence>
<evidence type="ECO:0000255" key="4">
    <source>
        <dbReference type="PROSITE-ProRule" id="PRU00147"/>
    </source>
</evidence>
<evidence type="ECO:0000255" key="5">
    <source>
        <dbReference type="PROSITE-ProRule" id="PRU00153"/>
    </source>
</evidence>
<evidence type="ECO:0000269" key="6">
    <source>
    </source>
</evidence>
<evidence type="ECO:0000303" key="7">
    <source>
    </source>
</evidence>
<evidence type="ECO:0000303" key="8">
    <source>
    </source>
</evidence>
<evidence type="ECO:0000303" key="9">
    <source>
    </source>
</evidence>
<evidence type="ECO:0000303" key="10">
    <source>
    </source>
</evidence>
<evidence type="ECO:0000303" key="11">
    <source ref="6"/>
</evidence>
<evidence type="ECO:0000305" key="12"/>
<evidence type="ECO:0000305" key="13">
    <source>
    </source>
</evidence>
<evidence type="ECO:0000312" key="14">
    <source>
        <dbReference type="RGD" id="3349"/>
    </source>
</evidence>
<evidence type="ECO:0007744" key="15">
    <source>
    </source>
</evidence>
<keyword id="KW-0025">Alternative splicing</keyword>
<keyword id="KW-0963">Cytoplasm</keyword>
<keyword id="KW-0256">Endoplasmic reticulum</keyword>
<keyword id="KW-0967">Endosome</keyword>
<keyword id="KW-0333">Golgi apparatus</keyword>
<keyword id="KW-0378">Hydrolase</keyword>
<keyword id="KW-0442">Lipid degradation</keyword>
<keyword id="KW-0443">Lipid metabolism</keyword>
<keyword id="KW-0449">Lipoprotein</keyword>
<keyword id="KW-0472">Membrane</keyword>
<keyword id="KW-0564">Palmitate</keyword>
<keyword id="KW-0597">Phosphoprotein</keyword>
<keyword id="KW-1185">Reference proteome</keyword>
<keyword id="KW-0677">Repeat</keyword>
<protein>
    <recommendedName>
        <fullName evidence="12">Phospholipase D1</fullName>
        <shortName>PLD 1</shortName>
        <shortName>rPLD1</shortName>
        <ecNumber evidence="1">3.1.4.4</ecNumber>
    </recommendedName>
    <alternativeName>
        <fullName>Choline phosphatase 1</fullName>
    </alternativeName>
    <alternativeName>
        <fullName>Phosphatidylcholine-hydrolyzing phospholipase D1</fullName>
    </alternativeName>
</protein>
<organism>
    <name type="scientific">Rattus norvegicus</name>
    <name type="common">Rat</name>
    <dbReference type="NCBI Taxonomy" id="10116"/>
    <lineage>
        <taxon>Eukaryota</taxon>
        <taxon>Metazoa</taxon>
        <taxon>Chordata</taxon>
        <taxon>Craniata</taxon>
        <taxon>Vertebrata</taxon>
        <taxon>Euteleostomi</taxon>
        <taxon>Mammalia</taxon>
        <taxon>Eutheria</taxon>
        <taxon>Euarchontoglires</taxon>
        <taxon>Glires</taxon>
        <taxon>Rodentia</taxon>
        <taxon>Myomorpha</taxon>
        <taxon>Muroidea</taxon>
        <taxon>Muridae</taxon>
        <taxon>Murinae</taxon>
        <taxon>Rattus</taxon>
    </lineage>
</organism>
<feature type="chain" id="PRO_0000218804" description="Phospholipase D1">
    <location>
        <begin position="1"/>
        <end position="1074"/>
    </location>
</feature>
<feature type="domain" description="PX" evidence="4">
    <location>
        <begin position="81"/>
        <end position="212"/>
    </location>
</feature>
<feature type="domain" description="PH" evidence="3">
    <location>
        <begin position="219"/>
        <end position="328"/>
    </location>
</feature>
<feature type="domain" description="PLD phosphodiesterase 1" evidence="5">
    <location>
        <begin position="459"/>
        <end position="486"/>
    </location>
</feature>
<feature type="domain" description="PLD phosphodiesterase 2" evidence="5">
    <location>
        <begin position="891"/>
        <end position="918"/>
    </location>
</feature>
<feature type="region of interest" description="Catalytic">
    <location>
        <begin position="463"/>
        <end position="928"/>
    </location>
</feature>
<feature type="modified residue" description="Phosphoserine" evidence="15">
    <location>
        <position position="499"/>
    </location>
</feature>
<feature type="modified residue" description="Phosphoserine" evidence="1">
    <location>
        <position position="561"/>
    </location>
</feature>
<feature type="modified residue" description="Phosphoserine" evidence="15">
    <location>
        <position position="629"/>
    </location>
</feature>
<feature type="lipid moiety-binding region" description="S-palmitoyl cysteine" evidence="13">
    <location>
        <position position="240"/>
    </location>
</feature>
<feature type="lipid moiety-binding region" description="S-palmitoyl cysteine" evidence="13">
    <location>
        <position position="241"/>
    </location>
</feature>
<feature type="splice variant" id="VSP_005024" description="In isoform PLD1B." evidence="7 8 9 10">
    <original>SYFNHYRSHQNLIHGIKPHLKLFRPSSESEQGLTRHSAD</original>
    <variation>N</variation>
    <location>
        <begin position="585"/>
        <end position="623"/>
    </location>
</feature>
<feature type="splice variant" id="VSP_005025" description="In isoform PLD1C." evidence="11">
    <original>YFNHY</original>
    <variation>ESRLR</variation>
    <location>
        <begin position="586"/>
        <end position="590"/>
    </location>
</feature>
<feature type="splice variant" id="VSP_005026" description="In isoform PLD1C." evidence="11">
    <location>
        <begin position="591"/>
        <end position="1074"/>
    </location>
</feature>
<feature type="mutagenesis site" description="Abolishes palmitoylation and weakens membrane association; when associated with A-241." evidence="6">
    <original>C</original>
    <variation>A</variation>
    <location>
        <position position="240"/>
    </location>
</feature>
<feature type="mutagenesis site" description="Abolishes palmitoylation and weakens membrane association; when associated with A-240." evidence="6">
    <original>C</original>
    <variation>A</variation>
    <location>
        <position position="241"/>
    </location>
</feature>
<feature type="sequence conflict" description="In Ref. 4; BAA24576." evidence="12" ref="4">
    <original>R</original>
    <variation>K</variation>
    <location>
        <position position="4"/>
    </location>
</feature>
<feature type="sequence conflict" description="In Ref. 3 and 6." evidence="12" ref="3 6">
    <original>S</original>
    <variation>R</variation>
    <location>
        <position position="22"/>
    </location>
</feature>
<feature type="sequence conflict" description="In Ref. 1; BAA24076/BAA24077." evidence="12" ref="1">
    <original>R</original>
    <variation>K</variation>
    <location>
        <position position="283"/>
    </location>
</feature>
<feature type="sequence conflict" description="In Ref. 1, 2 and 4." evidence="12" ref="1 2 4">
    <original>N</original>
    <variation>D</variation>
    <location>
        <position position="542"/>
    </location>
</feature>
<feature type="sequence conflict" description="In Ref. 4; BAA24576." evidence="12" ref="4">
    <original>I</original>
    <variation>L</variation>
    <location>
        <position position="600"/>
    </location>
</feature>
<feature type="sequence conflict" description="In Ref. 1; BAA24076/BAA24077." evidence="12" ref="1">
    <original>P</original>
    <variation>A</variation>
    <location>
        <position position="709"/>
    </location>
</feature>
<feature type="sequence conflict" description="In Ref. 1; BAA24076/BAA24077." evidence="12" ref="1">
    <original>PG</original>
    <variation>EV</variation>
    <location>
        <begin position="735"/>
        <end position="736"/>
    </location>
</feature>
<feature type="sequence conflict" description="In Ref. 1; BAA24076/BAA24077." evidence="12" ref="1">
    <original>HA</original>
    <variation>QP</variation>
    <location>
        <begin position="739"/>
        <end position="740"/>
    </location>
</feature>
<feature type="sequence conflict" description="In Ref. 1." evidence="12" ref="1">
    <original>S</original>
    <variation>T</variation>
    <location>
        <position position="773"/>
    </location>
</feature>
<feature type="sequence conflict" description="In Ref. 1." evidence="12" ref="1">
    <original>H</original>
    <variation>R</variation>
    <location>
        <position position="775"/>
    </location>
</feature>
<feature type="sequence conflict" description="In Ref. 1; BAA24076/BAA24077." evidence="12" ref="1">
    <original>S</original>
    <variation>T</variation>
    <location>
        <position position="786"/>
    </location>
</feature>
<feature type="sequence conflict" description="In Ref. 1; BAA24076/BAA24077." evidence="12" ref="1">
    <original>A</original>
    <variation>C</variation>
    <location>
        <position position="800"/>
    </location>
</feature>
<feature type="sequence conflict" description="In Ref. 1; BAA24076/BAA24077." evidence="12" ref="1">
    <original>H</original>
    <variation>T</variation>
    <location>
        <position position="809"/>
    </location>
</feature>
<feature type="sequence conflict" description="In Ref. 1; BAA24076/BAA24077." evidence="12" ref="1">
    <original>D</original>
    <variation>N</variation>
    <location>
        <position position="830"/>
    </location>
</feature>
<feature type="sequence conflict" description="In Ref. 3; AAB86910." evidence="12" ref="3">
    <original>TE</original>
    <variation>RQ</variation>
    <location>
        <begin position="934"/>
        <end position="935"/>
    </location>
</feature>
<feature type="sequence conflict" description="In Ref. 1." evidence="12" ref="1">
    <original>FAQG</original>
    <variation>SLSTV</variation>
    <location>
        <begin position="951"/>
        <end position="954"/>
    </location>
</feature>
<reference key="1">
    <citation type="journal article" date="1997" name="Cytogenet. Cell Genet.">
        <title>Molecular cloning and chromosome mapping of rat phospholipase D genes, Pld1a, Pld1b and Pld2.</title>
        <authorList>
            <person name="Nakashima S."/>
            <person name="Matsuda Y."/>
            <person name="Akao Y."/>
            <person name="Yoshimura S."/>
            <person name="Sakai H."/>
            <person name="Hayakawa K."/>
            <person name="Andoh M."/>
            <person name="Nozawa Y."/>
        </authorList>
    </citation>
    <scope>NUCLEOTIDE SEQUENCE [MRNA] (ISOFORMS PLD1A AND PLD1B)</scope>
</reference>
<reference key="2">
    <citation type="journal article" date="1996" name="Biochem. Biophys. Res. Commun.">
        <title>Differential mRNA expression of phospholipase D (PLD) isozymes during cAMP-induced differentiation in C6 glioma cells.</title>
        <authorList>
            <person name="Yoshimura S."/>
            <person name="Nakashima S."/>
            <person name="Ohguchi K."/>
            <person name="Sakai H."/>
            <person name="Shinoda J."/>
            <person name="Sakai N."/>
            <person name="Nozawa Y."/>
        </authorList>
    </citation>
    <scope>NUCLEOTIDE SEQUENCE [MRNA] OF 467-673 (ISOFORMS PLD1A AND PLD1B)</scope>
    <source>
        <tissue>Glial cell</tissue>
    </source>
</reference>
<reference key="3">
    <citation type="journal article" date="1997" name="J. Biol. Chem.">
        <title>Cloning and characterization of phospholipase D from rat brain.</title>
        <authorList>
            <person name="Park S.K."/>
            <person name="Provost J.J."/>
            <person name="Bae C.D."/>
            <person name="Ho W.T."/>
            <person name="Exton J.H."/>
        </authorList>
    </citation>
    <scope>NUCLEOTIDE SEQUENCE [MRNA] (ISOFORM PLD1B)</scope>
</reference>
<reference key="4">
    <citation type="journal article" date="1998" name="Biochem. J.">
        <title>Cloning, differential regulation and tissue distribution of alternatively spliced isoforms of ADP-ribosylation-factor-dependent phospholipase D from rat liver.</title>
        <authorList>
            <person name="Katayama K."/>
            <person name="Kodaki T."/>
            <person name="Nagamachi Y."/>
            <person name="Yamashita S."/>
        </authorList>
    </citation>
    <scope>NUCLEOTIDE SEQUENCE [MRNA] (ISOFORMS PLD1A AND PLD1B)</scope>
</reference>
<reference key="5">
    <citation type="submission" date="1997-02" db="EMBL/GenBank/DDBJ databases">
        <title>Molecular cloning of a cDNA homologous to a phospholipase D1 segment.</title>
        <authorList>
            <person name="Lassegue B."/>
            <person name="Alexander R.W."/>
            <person name="Griendling K."/>
        </authorList>
    </citation>
    <scope>NUCLEOTIDE SEQUENCE [MRNA] OF 1-511</scope>
</reference>
<reference key="6">
    <citation type="submission" date="1997-08" db="EMBL/GenBank/DDBJ databases">
        <title>Phospholipase D not having transphosphatidylation reaction.</title>
        <authorList>
            <person name="Park S.K."/>
            <person name="Exton J.H."/>
        </authorList>
    </citation>
    <scope>NUCLEOTIDE SEQUENCE [MRNA] (ISOFORM PLD1C)</scope>
    <source>
        <tissue>Lung</tissue>
    </source>
</reference>
<reference key="7">
    <citation type="journal article" date="2001" name="J. Biol. Chem.">
        <title>Requirements and effects of palmitoylation of rat PLD1.</title>
        <authorList>
            <person name="Xie Z."/>
            <person name="Ho W.T."/>
            <person name="Exton J.H."/>
        </authorList>
    </citation>
    <scope>PALMITOYLATION AT CYS-240 AND CYS-241</scope>
    <scope>MUTAGENESIS OF CYS-240 AND CYS-241</scope>
    <scope>PHOSPHORYLATION</scope>
</reference>
<reference key="8">
    <citation type="journal article" date="2012" name="Nat. Commun.">
        <title>Quantitative maps of protein phosphorylation sites across 14 different rat organs and tissues.</title>
        <authorList>
            <person name="Lundby A."/>
            <person name="Secher A."/>
            <person name="Lage K."/>
            <person name="Nordsborg N.B."/>
            <person name="Dmytriyev A."/>
            <person name="Lundby C."/>
            <person name="Olsen J.V."/>
        </authorList>
    </citation>
    <scope>PHOSPHORYLATION [LARGE SCALE ANALYSIS] AT SER-499 AND SER-629</scope>
    <scope>IDENTIFICATION BY MASS SPECTROMETRY [LARGE SCALE ANALYSIS]</scope>
</reference>
<dbReference type="EC" id="3.1.4.4" evidence="1"/>
<dbReference type="EMBL" id="AB003170">
    <property type="protein sequence ID" value="BAA24076.1"/>
    <property type="molecule type" value="mRNA"/>
</dbReference>
<dbReference type="EMBL" id="AB003171">
    <property type="protein sequence ID" value="BAA24077.1"/>
    <property type="molecule type" value="mRNA"/>
</dbReference>
<dbReference type="EMBL" id="U69550">
    <property type="protein sequence ID" value="AAB86910.1"/>
    <property type="molecule type" value="mRNA"/>
</dbReference>
<dbReference type="EMBL" id="AB000778">
    <property type="protein sequence ID" value="BAA24576.1"/>
    <property type="molecule type" value="mRNA"/>
</dbReference>
<dbReference type="EMBL" id="AB000779">
    <property type="protein sequence ID" value="BAA24577.1"/>
    <property type="molecule type" value="mRNA"/>
</dbReference>
<dbReference type="EMBL" id="U88986">
    <property type="protein sequence ID" value="AAB91329.1"/>
    <property type="molecule type" value="mRNA"/>
</dbReference>
<dbReference type="EMBL" id="AF017251">
    <property type="protein sequence ID" value="AAD01609.1"/>
    <property type="molecule type" value="mRNA"/>
</dbReference>
<dbReference type="PIR" id="T13725">
    <property type="entry name" value="T13725"/>
</dbReference>
<dbReference type="PIR" id="T13732">
    <property type="entry name" value="T13732"/>
</dbReference>
<dbReference type="PIR" id="T13943">
    <property type="entry name" value="T13943"/>
</dbReference>
<dbReference type="PIR" id="T46635">
    <property type="entry name" value="T46635"/>
</dbReference>
<dbReference type="RefSeq" id="NP_112254.1">
    <property type="nucleotide sequence ID" value="NM_030992.1"/>
</dbReference>
<dbReference type="SMR" id="P70496"/>
<dbReference type="BioGRID" id="247168">
    <property type="interactions" value="1"/>
</dbReference>
<dbReference type="FunCoup" id="P70496">
    <property type="interactions" value="1129"/>
</dbReference>
<dbReference type="IntAct" id="P70496">
    <property type="interactions" value="1"/>
</dbReference>
<dbReference type="MINT" id="P70496"/>
<dbReference type="STRING" id="10116.ENSRNOP00000073521"/>
<dbReference type="ChEMBL" id="CHEMBL3308939"/>
<dbReference type="iPTMnet" id="P70496"/>
<dbReference type="PhosphoSitePlus" id="P70496"/>
<dbReference type="SwissPalm" id="P70496"/>
<dbReference type="PaxDb" id="10116-ENSRNOP00000034466"/>
<dbReference type="PeptideAtlas" id="P70496"/>
<dbReference type="GeneID" id="25096"/>
<dbReference type="KEGG" id="rno:25096"/>
<dbReference type="AGR" id="RGD:3349"/>
<dbReference type="CTD" id="5337"/>
<dbReference type="RGD" id="3349">
    <property type="gene designation" value="Pld1"/>
</dbReference>
<dbReference type="eggNOG" id="KOG1329">
    <property type="taxonomic scope" value="Eukaryota"/>
</dbReference>
<dbReference type="InParanoid" id="P70496"/>
<dbReference type="PhylomeDB" id="P70496"/>
<dbReference type="BRENDA" id="3.1.4.4">
    <property type="organism ID" value="5301"/>
</dbReference>
<dbReference type="Reactome" id="R-RNO-1483166">
    <property type="pathway name" value="Synthesis of PA"/>
</dbReference>
<dbReference type="Reactome" id="R-RNO-2029485">
    <property type="pathway name" value="Role of phospholipids in phagocytosis"/>
</dbReference>
<dbReference type="Reactome" id="R-RNO-6798695">
    <property type="pathway name" value="Neutrophil degranulation"/>
</dbReference>
<dbReference type="Reactome" id="R-RNO-8980692">
    <property type="pathway name" value="RHOA GTPase cycle"/>
</dbReference>
<dbReference type="Reactome" id="R-RNO-9013149">
    <property type="pathway name" value="RAC1 GTPase cycle"/>
</dbReference>
<dbReference type="Reactome" id="R-RNO-9013408">
    <property type="pathway name" value="RHOG GTPase cycle"/>
</dbReference>
<dbReference type="PRO" id="PR:P70496"/>
<dbReference type="Proteomes" id="UP000002494">
    <property type="component" value="Unplaced"/>
</dbReference>
<dbReference type="GO" id="GO:0016324">
    <property type="term" value="C:apical plasma membrane"/>
    <property type="evidence" value="ECO:0000266"/>
    <property type="project" value="RGD"/>
</dbReference>
<dbReference type="GO" id="GO:0098981">
    <property type="term" value="C:cholinergic synapse"/>
    <property type="evidence" value="ECO:0000266"/>
    <property type="project" value="RGD"/>
</dbReference>
<dbReference type="GO" id="GO:0031410">
    <property type="term" value="C:cytoplasmic vesicle"/>
    <property type="evidence" value="ECO:0000318"/>
    <property type="project" value="GO_Central"/>
</dbReference>
<dbReference type="GO" id="GO:0030139">
    <property type="term" value="C:endocytic vesicle"/>
    <property type="evidence" value="ECO:0000266"/>
    <property type="project" value="RGD"/>
</dbReference>
<dbReference type="GO" id="GO:0005789">
    <property type="term" value="C:endoplasmic reticulum membrane"/>
    <property type="evidence" value="ECO:0007669"/>
    <property type="project" value="UniProtKB-SubCell"/>
</dbReference>
<dbReference type="GO" id="GO:0005768">
    <property type="term" value="C:endosome"/>
    <property type="evidence" value="ECO:0000266"/>
    <property type="project" value="RGD"/>
</dbReference>
<dbReference type="GO" id="GO:0005794">
    <property type="term" value="C:Golgi apparatus"/>
    <property type="evidence" value="ECO:0000266"/>
    <property type="project" value="RGD"/>
</dbReference>
<dbReference type="GO" id="GO:0031985">
    <property type="term" value="C:Golgi cisterna"/>
    <property type="evidence" value="ECO:0000314"/>
    <property type="project" value="RGD"/>
</dbReference>
<dbReference type="GO" id="GO:0000139">
    <property type="term" value="C:Golgi membrane"/>
    <property type="evidence" value="ECO:0007669"/>
    <property type="project" value="UniProtKB-SubCell"/>
</dbReference>
<dbReference type="GO" id="GO:0030027">
    <property type="term" value="C:lamellipodium"/>
    <property type="evidence" value="ECO:0000314"/>
    <property type="project" value="RGD"/>
</dbReference>
<dbReference type="GO" id="GO:0031902">
    <property type="term" value="C:late endosome membrane"/>
    <property type="evidence" value="ECO:0007669"/>
    <property type="project" value="UniProtKB-SubCell"/>
</dbReference>
<dbReference type="GO" id="GO:0048471">
    <property type="term" value="C:perinuclear region of cytoplasm"/>
    <property type="evidence" value="ECO:0007669"/>
    <property type="project" value="UniProtKB-SubCell"/>
</dbReference>
<dbReference type="GO" id="GO:0005886">
    <property type="term" value="C:plasma membrane"/>
    <property type="evidence" value="ECO:0000318"/>
    <property type="project" value="GO_Central"/>
</dbReference>
<dbReference type="GO" id="GO:0045202">
    <property type="term" value="C:synapse"/>
    <property type="evidence" value="ECO:0000314"/>
    <property type="project" value="SynGO"/>
</dbReference>
<dbReference type="GO" id="GO:0031982">
    <property type="term" value="C:vesicle"/>
    <property type="evidence" value="ECO:0000314"/>
    <property type="project" value="RGD"/>
</dbReference>
<dbReference type="GO" id="GO:0035091">
    <property type="term" value="F:phosphatidylinositol binding"/>
    <property type="evidence" value="ECO:0007669"/>
    <property type="project" value="InterPro"/>
</dbReference>
<dbReference type="GO" id="GO:0004630">
    <property type="term" value="F:phospholipase D activity"/>
    <property type="evidence" value="ECO:0000314"/>
    <property type="project" value="RGD"/>
</dbReference>
<dbReference type="GO" id="GO:0031670">
    <property type="term" value="P:cellular response to nutrient"/>
    <property type="evidence" value="ECO:0000266"/>
    <property type="project" value="RGD"/>
</dbReference>
<dbReference type="GO" id="GO:0050830">
    <property type="term" value="P:defense response to Gram-positive bacterium"/>
    <property type="evidence" value="ECO:0000266"/>
    <property type="project" value="RGD"/>
</dbReference>
<dbReference type="GO" id="GO:0035556">
    <property type="term" value="P:intracellular signal transduction"/>
    <property type="evidence" value="ECO:0007669"/>
    <property type="project" value="InterPro"/>
</dbReference>
<dbReference type="GO" id="GO:0006654">
    <property type="term" value="P:phosphatidic acid biosynthetic process"/>
    <property type="evidence" value="ECO:0000315"/>
    <property type="project" value="MGI"/>
</dbReference>
<dbReference type="GO" id="GO:0008654">
    <property type="term" value="P:phospholipid biosynthetic process"/>
    <property type="evidence" value="ECO:0000315"/>
    <property type="project" value="MGI"/>
</dbReference>
<dbReference type="GO" id="GO:0009395">
    <property type="term" value="P:phospholipid catabolic process"/>
    <property type="evidence" value="ECO:0000315"/>
    <property type="project" value="RGD"/>
</dbReference>
<dbReference type="GO" id="GO:0030335">
    <property type="term" value="P:positive regulation of cell migration"/>
    <property type="evidence" value="ECO:0000315"/>
    <property type="project" value="RGD"/>
</dbReference>
<dbReference type="GO" id="GO:0045727">
    <property type="term" value="P:positive regulation of translation"/>
    <property type="evidence" value="ECO:0000266"/>
    <property type="project" value="RGD"/>
</dbReference>
<dbReference type="GO" id="GO:0032534">
    <property type="term" value="P:regulation of microvillus assembly"/>
    <property type="evidence" value="ECO:0000266"/>
    <property type="project" value="RGD"/>
</dbReference>
<dbReference type="GO" id="GO:0098693">
    <property type="term" value="P:regulation of synaptic vesicle cycle"/>
    <property type="evidence" value="ECO:0000266"/>
    <property type="project" value="RGD"/>
</dbReference>
<dbReference type="GO" id="GO:0060627">
    <property type="term" value="P:regulation of vesicle-mediated transport"/>
    <property type="evidence" value="ECO:0000318"/>
    <property type="project" value="GO_Central"/>
</dbReference>
<dbReference type="GO" id="GO:0043434">
    <property type="term" value="P:response to peptide hormone"/>
    <property type="evidence" value="ECO:0000315"/>
    <property type="project" value="RGD"/>
</dbReference>
<dbReference type="CDD" id="cd01254">
    <property type="entry name" value="PH_PLD"/>
    <property type="match status" value="1"/>
</dbReference>
<dbReference type="CDD" id="cd09842">
    <property type="entry name" value="PLDc_vPLD1_1"/>
    <property type="match status" value="1"/>
</dbReference>
<dbReference type="CDD" id="cd09844">
    <property type="entry name" value="PLDc_vPLD1_2"/>
    <property type="match status" value="1"/>
</dbReference>
<dbReference type="CDD" id="cd07296">
    <property type="entry name" value="PX_PLD1"/>
    <property type="match status" value="1"/>
</dbReference>
<dbReference type="FunFam" id="2.30.29.30:FF:000114">
    <property type="entry name" value="Phospholipase"/>
    <property type="match status" value="1"/>
</dbReference>
<dbReference type="FunFam" id="3.30.1520.10:FF:000021">
    <property type="entry name" value="Phospholipase"/>
    <property type="match status" value="1"/>
</dbReference>
<dbReference type="FunFam" id="3.30.870.10:FF:000005">
    <property type="entry name" value="Phospholipase"/>
    <property type="match status" value="1"/>
</dbReference>
<dbReference type="FunFam" id="3.30.870.10:FF:000009">
    <property type="entry name" value="Phospholipase"/>
    <property type="match status" value="1"/>
</dbReference>
<dbReference type="FunFam" id="3.30.870.10:FF:000018">
    <property type="entry name" value="Phospholipase"/>
    <property type="match status" value="1"/>
</dbReference>
<dbReference type="Gene3D" id="3.30.870.10">
    <property type="entry name" value="Endonuclease Chain A"/>
    <property type="match status" value="3"/>
</dbReference>
<dbReference type="Gene3D" id="3.30.1520.10">
    <property type="entry name" value="Phox-like domain"/>
    <property type="match status" value="1"/>
</dbReference>
<dbReference type="Gene3D" id="2.30.29.30">
    <property type="entry name" value="Pleckstrin-homology domain (PH domain)/Phosphotyrosine-binding domain (PTB)"/>
    <property type="match status" value="1"/>
</dbReference>
<dbReference type="InterPro" id="IPR011993">
    <property type="entry name" value="PH-like_dom_sf"/>
</dbReference>
<dbReference type="InterPro" id="IPR001849">
    <property type="entry name" value="PH_domain"/>
</dbReference>
<dbReference type="InterPro" id="IPR025202">
    <property type="entry name" value="PLD-like_dom"/>
</dbReference>
<dbReference type="InterPro" id="IPR001736">
    <property type="entry name" value="PLipase_D/transphosphatidylase"/>
</dbReference>
<dbReference type="InterPro" id="IPR016555">
    <property type="entry name" value="PLipase_D_euk"/>
</dbReference>
<dbReference type="InterPro" id="IPR015679">
    <property type="entry name" value="PLipase_D_fam"/>
</dbReference>
<dbReference type="InterPro" id="IPR001683">
    <property type="entry name" value="PX_dom"/>
</dbReference>
<dbReference type="InterPro" id="IPR036871">
    <property type="entry name" value="PX_dom_sf"/>
</dbReference>
<dbReference type="PANTHER" id="PTHR18896">
    <property type="entry name" value="PHOSPHOLIPASE D"/>
    <property type="match status" value="1"/>
</dbReference>
<dbReference type="PANTHER" id="PTHR18896:SF57">
    <property type="entry name" value="PHOSPHOLIPASE D1"/>
    <property type="match status" value="1"/>
</dbReference>
<dbReference type="Pfam" id="PF00169">
    <property type="entry name" value="PH"/>
    <property type="match status" value="1"/>
</dbReference>
<dbReference type="Pfam" id="PF00614">
    <property type="entry name" value="PLDc"/>
    <property type="match status" value="1"/>
</dbReference>
<dbReference type="Pfam" id="PF13091">
    <property type="entry name" value="PLDc_2"/>
    <property type="match status" value="1"/>
</dbReference>
<dbReference type="Pfam" id="PF00787">
    <property type="entry name" value="PX"/>
    <property type="match status" value="1"/>
</dbReference>
<dbReference type="PIRSF" id="PIRSF009376">
    <property type="entry name" value="Phospholipase_D_euk"/>
    <property type="match status" value="1"/>
</dbReference>
<dbReference type="SMART" id="SM00233">
    <property type="entry name" value="PH"/>
    <property type="match status" value="1"/>
</dbReference>
<dbReference type="SMART" id="SM00155">
    <property type="entry name" value="PLDc"/>
    <property type="match status" value="2"/>
</dbReference>
<dbReference type="SMART" id="SM00312">
    <property type="entry name" value="PX"/>
    <property type="match status" value="1"/>
</dbReference>
<dbReference type="SUPFAM" id="SSF50729">
    <property type="entry name" value="PH domain-like"/>
    <property type="match status" value="1"/>
</dbReference>
<dbReference type="SUPFAM" id="SSF56024">
    <property type="entry name" value="Phospholipase D/nuclease"/>
    <property type="match status" value="3"/>
</dbReference>
<dbReference type="SUPFAM" id="SSF64268">
    <property type="entry name" value="PX domain"/>
    <property type="match status" value="1"/>
</dbReference>
<dbReference type="PROSITE" id="PS50003">
    <property type="entry name" value="PH_DOMAIN"/>
    <property type="match status" value="1"/>
</dbReference>
<dbReference type="PROSITE" id="PS50035">
    <property type="entry name" value="PLD"/>
    <property type="match status" value="2"/>
</dbReference>
<dbReference type="PROSITE" id="PS50195">
    <property type="entry name" value="PX"/>
    <property type="match status" value="1"/>
</dbReference>
<gene>
    <name evidence="14" type="primary">Pld1</name>
</gene>